<keyword id="KW-0972">Capsule biogenesis/degradation</keyword>
<keyword id="KW-0520">NAD</keyword>
<keyword id="KW-0560">Oxidoreductase</keyword>
<protein>
    <recommendedName>
        <fullName evidence="4">UDP-N-acetyl-D-glucosamine 6-dehydrogenase</fullName>
        <shortName evidence="4">UDP-GlcNAc 6-dehydrogenase</shortName>
        <ecNumber evidence="2">1.1.1.136</ecNumber>
    </recommendedName>
    <alternativeName>
        <fullName evidence="7">Vi polysaccharide biosynthesis protein VipA/TviB</fullName>
    </alternativeName>
    <alternativeName>
        <fullName evidence="6">Vi polysaccharide synthesis gene A</fullName>
    </alternativeName>
</protein>
<reference evidence="12" key="1">
    <citation type="journal article" date="1993" name="Res. Microbiol.">
        <title>Identification of six open reading frames in the Salmonella enterica subsp. enterica ser. Typhi viaB locus involved in Vi antigen production.</title>
        <authorList>
            <person name="Waxin H."/>
            <person name="Virlogeux I."/>
            <person name="Kolyva S."/>
            <person name="Popoff M.Y."/>
        </authorList>
    </citation>
    <scope>NUCLEOTIDE SEQUENCE [GENOMIC DNA]</scope>
    <source>
        <strain>ATCC 700931 / Ty2</strain>
    </source>
</reference>
<reference evidence="11" key="2">
    <citation type="journal article" date="1993" name="J. Bacteriol.">
        <title>Complete nucleotide sequence and molecular characterization of ViaB region encoding Vi antigen in Salmonella typhi.</title>
        <authorList>
            <person name="Hashimoto Y."/>
            <person name="Li N."/>
            <person name="Yokoyama H."/>
            <person name="Ezaki T."/>
        </authorList>
    </citation>
    <scope>NUCLEOTIDE SEQUENCE [GENOMIC DNA]</scope>
    <scope>FUNCTION</scope>
    <scope>PATHWAY</scope>
    <scope>DISRUPTION PHENOTYPE</scope>
    <source>
        <strain>GIFU 10007</strain>
    </source>
</reference>
<reference evidence="13" key="3">
    <citation type="journal article" date="2001" name="Nature">
        <title>Complete genome sequence of a multiple drug resistant Salmonella enterica serovar Typhi CT18.</title>
        <authorList>
            <person name="Parkhill J."/>
            <person name="Dougan G."/>
            <person name="James K.D."/>
            <person name="Thomson N.R."/>
            <person name="Pickard D."/>
            <person name="Wain J."/>
            <person name="Churcher C.M."/>
            <person name="Mungall K.L."/>
            <person name="Bentley S.D."/>
            <person name="Holden M.T.G."/>
            <person name="Sebaihia M."/>
            <person name="Baker S."/>
            <person name="Basham D."/>
            <person name="Brooks K."/>
            <person name="Chillingworth T."/>
            <person name="Connerton P."/>
            <person name="Cronin A."/>
            <person name="Davis P."/>
            <person name="Davies R.M."/>
            <person name="Dowd L."/>
            <person name="White N."/>
            <person name="Farrar J."/>
            <person name="Feltwell T."/>
            <person name="Hamlin N."/>
            <person name="Haque A."/>
            <person name="Hien T.T."/>
            <person name="Holroyd S."/>
            <person name="Jagels K."/>
            <person name="Krogh A."/>
            <person name="Larsen T.S."/>
            <person name="Leather S."/>
            <person name="Moule S."/>
            <person name="O'Gaora P."/>
            <person name="Parry C."/>
            <person name="Quail M.A."/>
            <person name="Rutherford K.M."/>
            <person name="Simmonds M."/>
            <person name="Skelton J."/>
            <person name="Stevens K."/>
            <person name="Whitehead S."/>
            <person name="Barrell B.G."/>
        </authorList>
    </citation>
    <scope>NUCLEOTIDE SEQUENCE [LARGE SCALE GENOMIC DNA]</scope>
    <source>
        <strain>CT18</strain>
    </source>
</reference>
<reference evidence="10" key="4">
    <citation type="journal article" date="2003" name="J. Bacteriol.">
        <title>Comparative genomics of Salmonella enterica serovar Typhi strains Ty2 and CT18.</title>
        <authorList>
            <person name="Deng W."/>
            <person name="Liou S.-R."/>
            <person name="Plunkett G. III"/>
            <person name="Mayhew G.F."/>
            <person name="Rose D.J."/>
            <person name="Burland V."/>
            <person name="Kodoyianni V."/>
            <person name="Schwartz D.C."/>
            <person name="Blattner F.R."/>
        </authorList>
    </citation>
    <scope>NUCLEOTIDE SEQUENCE [LARGE SCALE GENOMIC DNA]</scope>
    <source>
        <strain>ATCC 700931 / Ty2</strain>
    </source>
</reference>
<reference key="5">
    <citation type="journal article" date="2006" name="Biochemistry">
        <title>Vi antigen biosynthesis in Salmonella typhi: characterization of UDP-N-acetylglucosamine C-6 dehydrogenase (TviB) and UDP-N-acetylglucosaminuronic acid C-4 epimerase (TviC).</title>
        <authorList>
            <person name="Zhang H."/>
            <person name="Zhou Y."/>
            <person name="Bao H."/>
            <person name="Liu H.W."/>
        </authorList>
    </citation>
    <scope>FUNCTION</scope>
    <scope>CATALYTIC ACTIVITY</scope>
    <scope>BIOPHYSICOCHEMICAL PROPERTIES</scope>
    <scope>SUBUNIT</scope>
    <source>
        <strain>ATCC 700931 / Ty2</strain>
    </source>
</reference>
<name>WCDA_SALTI</name>
<sequence length="425" mass="47675">MFGIDEVKIAIIGLGYVGLPLAVEFGKSRQVVGFDVNKKRILELKNGVDVNLETTEEELREARYLKFTSEIEKIKECNFYIITVPTPINTYKQPDLTPLIKASETVGTVLNRGDIVVYESTVYPGCTEEECVPILARMSGMTFNQDFYVGYSPERINPGDKKHRLTNIKKITSGSTAQIAELIDEVYQQIISAGTYKAESIKVAEAAKVIENTQRDLNIALVNELAIIFNRLNIDTEAVLRAAGSKWNFLPFRPGLVGGHCIGVDPYYLTHKSQGIGYYPEIILAGRRLNDNMGNYVSEQLIKAMIKKGINVEGSSVLILGFTFKENCPDIRNTRIIDVVKELGKYSCKVDIFDPWVDAEEVRREYGIIPVSEVKSSHYDAIIVAVGHQQFKQMGSEDIRGFGKDKHVLYDLKYVLPAEQSDVRL</sequence>
<evidence type="ECO:0000250" key="1">
    <source>
        <dbReference type="UniProtKB" id="Q0P8H3"/>
    </source>
</evidence>
<evidence type="ECO:0000269" key="2">
    <source>
    </source>
</evidence>
<evidence type="ECO:0000269" key="3">
    <source>
    </source>
</evidence>
<evidence type="ECO:0000303" key="4">
    <source>
    </source>
</evidence>
<evidence type="ECO:0000303" key="5">
    <source>
    </source>
</evidence>
<evidence type="ECO:0000303" key="6">
    <source>
    </source>
</evidence>
<evidence type="ECO:0000305" key="7"/>
<evidence type="ECO:0000305" key="8">
    <source>
    </source>
</evidence>
<evidence type="ECO:0000305" key="9">
    <source>
    </source>
</evidence>
<evidence type="ECO:0000312" key="10">
    <source>
        <dbReference type="EMBL" id="AAO71805.1"/>
    </source>
</evidence>
<evidence type="ECO:0000312" key="11">
    <source>
        <dbReference type="EMBL" id="BAA03192.1"/>
    </source>
</evidence>
<evidence type="ECO:0000312" key="12">
    <source>
        <dbReference type="EMBL" id="CAA47991.1"/>
    </source>
</evidence>
<evidence type="ECO:0000312" key="13">
    <source>
        <dbReference type="EMBL" id="CAD06781.1"/>
    </source>
</evidence>
<proteinExistence type="evidence at protein level"/>
<organism>
    <name type="scientific">Salmonella typhi</name>
    <dbReference type="NCBI Taxonomy" id="90370"/>
    <lineage>
        <taxon>Bacteria</taxon>
        <taxon>Pseudomonadati</taxon>
        <taxon>Pseudomonadota</taxon>
        <taxon>Gammaproteobacteria</taxon>
        <taxon>Enterobacterales</taxon>
        <taxon>Enterobacteriaceae</taxon>
        <taxon>Salmonella</taxon>
    </lineage>
</organism>
<feature type="chain" id="PRO_0000074076" description="UDP-N-acetyl-D-glucosamine 6-dehydrogenase">
    <location>
        <begin position="1"/>
        <end position="425"/>
    </location>
</feature>
<feature type="active site" description="Nucleophile" evidence="1">
    <location>
        <position position="261"/>
    </location>
</feature>
<feature type="binding site" evidence="1">
    <location>
        <position position="17"/>
    </location>
    <ligand>
        <name>NAD(+)</name>
        <dbReference type="ChEBI" id="CHEBI:57540"/>
    </ligand>
</feature>
<feature type="binding site" evidence="1">
    <location>
        <position position="35"/>
    </location>
    <ligand>
        <name>NAD(+)</name>
        <dbReference type="ChEBI" id="CHEBI:57540"/>
    </ligand>
</feature>
<feature type="binding site" evidence="1">
    <location>
        <position position="40"/>
    </location>
    <ligand>
        <name>NAD(+)</name>
        <dbReference type="ChEBI" id="CHEBI:57540"/>
    </ligand>
</feature>
<feature type="binding site" evidence="1">
    <location>
        <position position="86"/>
    </location>
    <ligand>
        <name>NAD(+)</name>
        <dbReference type="ChEBI" id="CHEBI:57540"/>
    </ligand>
</feature>
<feature type="binding site" evidence="1">
    <location>
        <position position="121"/>
    </location>
    <ligand>
        <name>NAD(+)</name>
        <dbReference type="ChEBI" id="CHEBI:57540"/>
    </ligand>
</feature>
<feature type="binding site" evidence="1">
    <location>
        <position position="332"/>
    </location>
    <ligand>
        <name>NAD(+)</name>
        <dbReference type="ChEBI" id="CHEBI:57540"/>
    </ligand>
</feature>
<gene>
    <name evidence="11 12" type="primary">wcdA</name>
    <name evidence="5" type="synonym">tviB</name>
    <name evidence="6" type="synonym">vipA</name>
    <name evidence="13" type="ordered locus">STY4661</name>
    <name evidence="10" type="ordered locus">t4352</name>
</gene>
<dbReference type="EC" id="1.1.1.136" evidence="2"/>
<dbReference type="EMBL" id="X67785">
    <property type="protein sequence ID" value="CAA47991.1"/>
    <property type="molecule type" value="Genomic_DNA"/>
</dbReference>
<dbReference type="EMBL" id="D14156">
    <property type="protein sequence ID" value="BAA03192.1"/>
    <property type="molecule type" value="Genomic_DNA"/>
</dbReference>
<dbReference type="EMBL" id="AL513382">
    <property type="protein sequence ID" value="CAD06781.1"/>
    <property type="molecule type" value="Genomic_DNA"/>
</dbReference>
<dbReference type="EMBL" id="AE014613">
    <property type="protein sequence ID" value="AAO71805.1"/>
    <property type="molecule type" value="Genomic_DNA"/>
</dbReference>
<dbReference type="PIR" id="B36892">
    <property type="entry name" value="B36892"/>
</dbReference>
<dbReference type="RefSeq" id="NP_458740.1">
    <property type="nucleotide sequence ID" value="NC_003198.1"/>
</dbReference>
<dbReference type="RefSeq" id="WP_000466893.1">
    <property type="nucleotide sequence ID" value="NZ_WSUR01000012.1"/>
</dbReference>
<dbReference type="SMR" id="Q04972"/>
<dbReference type="STRING" id="220341.gene:17588478"/>
<dbReference type="KEGG" id="stt:t4352"/>
<dbReference type="KEGG" id="sty:STY4661"/>
<dbReference type="PATRIC" id="fig|220341.7.peg.4760"/>
<dbReference type="eggNOG" id="COG0677">
    <property type="taxonomic scope" value="Bacteria"/>
</dbReference>
<dbReference type="HOGENOM" id="CLU_023810_3_1_6"/>
<dbReference type="OMA" id="WDVIRCA"/>
<dbReference type="OrthoDB" id="9803238at2"/>
<dbReference type="UniPathway" id="UPA00811"/>
<dbReference type="UniPathway" id="UPA00934"/>
<dbReference type="Proteomes" id="UP000000541">
    <property type="component" value="Chromosome"/>
</dbReference>
<dbReference type="Proteomes" id="UP000002670">
    <property type="component" value="Chromosome"/>
</dbReference>
<dbReference type="GO" id="GO:0051287">
    <property type="term" value="F:NAD binding"/>
    <property type="evidence" value="ECO:0007669"/>
    <property type="project" value="InterPro"/>
</dbReference>
<dbReference type="GO" id="GO:0016628">
    <property type="term" value="F:oxidoreductase activity, acting on the CH-CH group of donors, NAD or NADP as acceptor"/>
    <property type="evidence" value="ECO:0007669"/>
    <property type="project" value="InterPro"/>
</dbReference>
<dbReference type="GO" id="GO:0047004">
    <property type="term" value="F:UDP-N-acetylglucosamine 6-dehydrogenase activity"/>
    <property type="evidence" value="ECO:0007669"/>
    <property type="project" value="RHEA"/>
</dbReference>
<dbReference type="GO" id="GO:0045227">
    <property type="term" value="P:capsule polysaccharide biosynthetic process"/>
    <property type="evidence" value="ECO:0007669"/>
    <property type="project" value="UniProtKB-UniPathway"/>
</dbReference>
<dbReference type="Gene3D" id="3.40.50.720">
    <property type="entry name" value="NAD(P)-binding Rossmann-like Domain"/>
    <property type="match status" value="2"/>
</dbReference>
<dbReference type="InterPro" id="IPR008927">
    <property type="entry name" value="6-PGluconate_DH-like_C_sf"/>
</dbReference>
<dbReference type="InterPro" id="IPR036291">
    <property type="entry name" value="NAD(P)-bd_dom_sf"/>
</dbReference>
<dbReference type="InterPro" id="IPR017476">
    <property type="entry name" value="UDP-Glc/GDP-Man"/>
</dbReference>
<dbReference type="InterPro" id="IPR014027">
    <property type="entry name" value="UDP-Glc/GDP-Man_DH_C"/>
</dbReference>
<dbReference type="InterPro" id="IPR036220">
    <property type="entry name" value="UDP-Glc/GDP-Man_DH_C_sf"/>
</dbReference>
<dbReference type="InterPro" id="IPR014026">
    <property type="entry name" value="UDP-Glc/GDP-Man_DH_dimer"/>
</dbReference>
<dbReference type="InterPro" id="IPR001732">
    <property type="entry name" value="UDP-Glc/GDP-Man_DH_N"/>
</dbReference>
<dbReference type="InterPro" id="IPR028359">
    <property type="entry name" value="UDP_ManNAc/GlcNAc_DH"/>
</dbReference>
<dbReference type="NCBIfam" id="TIGR03026">
    <property type="entry name" value="NDP-sugDHase"/>
    <property type="match status" value="1"/>
</dbReference>
<dbReference type="NCBIfam" id="NF011729">
    <property type="entry name" value="PRK15182.1"/>
    <property type="match status" value="1"/>
</dbReference>
<dbReference type="PANTHER" id="PTHR43491">
    <property type="entry name" value="UDP-N-ACETYL-D-MANNOSAMINE DEHYDROGENASE"/>
    <property type="match status" value="1"/>
</dbReference>
<dbReference type="PANTHER" id="PTHR43491:SF2">
    <property type="entry name" value="UDP-N-ACETYL-D-MANNOSAMINE DEHYDROGENASE"/>
    <property type="match status" value="1"/>
</dbReference>
<dbReference type="Pfam" id="PF00984">
    <property type="entry name" value="UDPG_MGDP_dh"/>
    <property type="match status" value="1"/>
</dbReference>
<dbReference type="Pfam" id="PF03720">
    <property type="entry name" value="UDPG_MGDP_dh_C"/>
    <property type="match status" value="1"/>
</dbReference>
<dbReference type="Pfam" id="PF03721">
    <property type="entry name" value="UDPG_MGDP_dh_N"/>
    <property type="match status" value="1"/>
</dbReference>
<dbReference type="PIRSF" id="PIRSF500136">
    <property type="entry name" value="UDP_ManNAc_DH"/>
    <property type="match status" value="1"/>
</dbReference>
<dbReference type="PIRSF" id="PIRSF000124">
    <property type="entry name" value="UDPglc_GDPman_dh"/>
    <property type="match status" value="1"/>
</dbReference>
<dbReference type="SMART" id="SM00984">
    <property type="entry name" value="UDPG_MGDP_dh_C"/>
    <property type="match status" value="1"/>
</dbReference>
<dbReference type="SUPFAM" id="SSF48179">
    <property type="entry name" value="6-phosphogluconate dehydrogenase C-terminal domain-like"/>
    <property type="match status" value="1"/>
</dbReference>
<dbReference type="SUPFAM" id="SSF51735">
    <property type="entry name" value="NAD(P)-binding Rossmann-fold domains"/>
    <property type="match status" value="1"/>
</dbReference>
<dbReference type="SUPFAM" id="SSF52413">
    <property type="entry name" value="UDP-glucose/GDP-mannose dehydrogenase C-terminal domain"/>
    <property type="match status" value="1"/>
</dbReference>
<accession>Q04972</accession>
<comment type="function">
    <text evidence="2 3">Dehydrogenase required for the biosynthesis of the capsular polysaccharide, commonly referred as the Vi antigen, an important virulence factor (PubMed:8331073). Catalyzes the conversion of UDP-N-acetylglucosamine (UDP-GlcNAc) to UDP-N-acetylglucosaminuronic acid (UDP-GlcNAcA) (PubMed:16800641). Cannot use UDP-GalNAc, UDP-Glc and UDP-Gal as substrates (PubMed:16800641).</text>
</comment>
<comment type="catalytic activity">
    <reaction evidence="2">
        <text>UDP-N-acetyl-alpha-D-glucosamine + 2 NAD(+) + H2O = UDP-2-acetamido-2-deoxy-alpha-D-glucuronate + 2 NADH + 3 H(+)</text>
        <dbReference type="Rhea" id="RHEA:13325"/>
        <dbReference type="ChEBI" id="CHEBI:15377"/>
        <dbReference type="ChEBI" id="CHEBI:15378"/>
        <dbReference type="ChEBI" id="CHEBI:57540"/>
        <dbReference type="ChEBI" id="CHEBI:57705"/>
        <dbReference type="ChEBI" id="CHEBI:57945"/>
        <dbReference type="ChEBI" id="CHEBI:65040"/>
        <dbReference type="EC" id="1.1.1.136"/>
    </reaction>
    <physiologicalReaction direction="left-to-right" evidence="2">
        <dbReference type="Rhea" id="RHEA:13326"/>
    </physiologicalReaction>
</comment>
<comment type="biophysicochemical properties">
    <kinetics>
        <KM evidence="2">77 uM for UDP-GlcNAc</KM>
        <KM evidence="2">276 uM for NAD(+)</KM>
        <text evidence="2">kcat is 15.5 min(-1).</text>
    </kinetics>
    <phDependence>
        <text evidence="2">Optimum pH is 7.2.</text>
    </phDependence>
</comment>
<comment type="pathway">
    <text evidence="3 8 9">Capsule biogenesis; capsule polysaccharide biosynthesis.</text>
</comment>
<comment type="pathway">
    <text evidence="3 8 9">Glycan metabolism; Vi-antigen biosynthesis.</text>
</comment>
<comment type="subunit">
    <text evidence="2">Homotrimer.</text>
</comment>
<comment type="disruption phenotype">
    <text evidence="3">The disruption mutant cannot synthesize the Vi polysaccharide.</text>
</comment>
<comment type="similarity">
    <text evidence="7">Belongs to the UDP-glucose/GDP-mannose dehydrogenase family.</text>
</comment>